<dbReference type="EMBL" id="BA000045">
    <property type="protein sequence ID" value="BAC88733.1"/>
    <property type="molecule type" value="Genomic_DNA"/>
</dbReference>
<dbReference type="RefSeq" id="NP_923738.1">
    <property type="nucleotide sequence ID" value="NC_005125.1"/>
</dbReference>
<dbReference type="RefSeq" id="WP_011140794.1">
    <property type="nucleotide sequence ID" value="NC_005125.1"/>
</dbReference>
<dbReference type="SMR" id="Q7NMH4"/>
<dbReference type="STRING" id="251221.gene:10758269"/>
<dbReference type="EnsemblBacteria" id="BAC88733">
    <property type="protein sequence ID" value="BAC88733"/>
    <property type="gene ID" value="BAC88733"/>
</dbReference>
<dbReference type="KEGG" id="gvi:gsl0792"/>
<dbReference type="PATRIC" id="fig|251221.4.peg.808"/>
<dbReference type="eggNOG" id="COG0333">
    <property type="taxonomic scope" value="Bacteria"/>
</dbReference>
<dbReference type="HOGENOM" id="CLU_199882_0_0_3"/>
<dbReference type="InParanoid" id="Q7NMH4"/>
<dbReference type="OrthoDB" id="541730at2"/>
<dbReference type="PhylomeDB" id="Q7NMH4"/>
<dbReference type="Proteomes" id="UP000000557">
    <property type="component" value="Chromosome"/>
</dbReference>
<dbReference type="GO" id="GO:0015934">
    <property type="term" value="C:large ribosomal subunit"/>
    <property type="evidence" value="ECO:0007669"/>
    <property type="project" value="InterPro"/>
</dbReference>
<dbReference type="GO" id="GO:0003735">
    <property type="term" value="F:structural constituent of ribosome"/>
    <property type="evidence" value="ECO:0007669"/>
    <property type="project" value="InterPro"/>
</dbReference>
<dbReference type="GO" id="GO:0006412">
    <property type="term" value="P:translation"/>
    <property type="evidence" value="ECO:0007669"/>
    <property type="project" value="UniProtKB-UniRule"/>
</dbReference>
<dbReference type="HAMAP" id="MF_00340">
    <property type="entry name" value="Ribosomal_bL32"/>
    <property type="match status" value="1"/>
</dbReference>
<dbReference type="InterPro" id="IPR002677">
    <property type="entry name" value="Ribosomal_bL32"/>
</dbReference>
<dbReference type="InterPro" id="IPR044958">
    <property type="entry name" value="Ribosomal_bL32_plant/cyanobact"/>
</dbReference>
<dbReference type="PANTHER" id="PTHR36083">
    <property type="entry name" value="50S RIBOSOMAL PROTEIN L32, CHLOROPLASTIC"/>
    <property type="match status" value="1"/>
</dbReference>
<dbReference type="PANTHER" id="PTHR36083:SF1">
    <property type="entry name" value="LARGE RIBOSOMAL SUBUNIT PROTEIN BL32C"/>
    <property type="match status" value="1"/>
</dbReference>
<dbReference type="Pfam" id="PF01783">
    <property type="entry name" value="Ribosomal_L32p"/>
    <property type="match status" value="1"/>
</dbReference>
<name>RL32_GLOVI</name>
<protein>
    <recommendedName>
        <fullName evidence="1">Large ribosomal subunit protein bL32</fullName>
    </recommendedName>
    <alternativeName>
        <fullName evidence="3">50S ribosomal protein L32</fullName>
    </alternativeName>
</protein>
<proteinExistence type="inferred from homology"/>
<keyword id="KW-1185">Reference proteome</keyword>
<keyword id="KW-0687">Ribonucleoprotein</keyword>
<keyword id="KW-0689">Ribosomal protein</keyword>
<evidence type="ECO:0000255" key="1">
    <source>
        <dbReference type="HAMAP-Rule" id="MF_00340"/>
    </source>
</evidence>
<evidence type="ECO:0000256" key="2">
    <source>
        <dbReference type="SAM" id="MobiDB-lite"/>
    </source>
</evidence>
<evidence type="ECO:0000305" key="3"/>
<organism>
    <name type="scientific">Gloeobacter violaceus (strain ATCC 29082 / PCC 7421)</name>
    <dbReference type="NCBI Taxonomy" id="251221"/>
    <lineage>
        <taxon>Bacteria</taxon>
        <taxon>Bacillati</taxon>
        <taxon>Cyanobacteriota</taxon>
        <taxon>Cyanophyceae</taxon>
        <taxon>Gloeobacterales</taxon>
        <taxon>Gloeobacteraceae</taxon>
        <taxon>Gloeobacter</taxon>
    </lineage>
</organism>
<sequence>MAQPKKKTSNAKRDQRRATWKRKARVQAEKALALGKSILSGNNTGFYYPQLEAEEEEQAEE</sequence>
<feature type="chain" id="PRO_0000172344" description="Large ribosomal subunit protein bL32">
    <location>
        <begin position="1"/>
        <end position="61"/>
    </location>
</feature>
<feature type="region of interest" description="Disordered" evidence="2">
    <location>
        <begin position="1"/>
        <end position="23"/>
    </location>
</feature>
<feature type="compositionally biased region" description="Basic residues" evidence="2">
    <location>
        <begin position="1"/>
        <end position="10"/>
    </location>
</feature>
<reference key="1">
    <citation type="journal article" date="2003" name="DNA Res.">
        <title>Complete genome structure of Gloeobacter violaceus PCC 7421, a cyanobacterium that lacks thylakoids.</title>
        <authorList>
            <person name="Nakamura Y."/>
            <person name="Kaneko T."/>
            <person name="Sato S."/>
            <person name="Mimuro M."/>
            <person name="Miyashita H."/>
            <person name="Tsuchiya T."/>
            <person name="Sasamoto S."/>
            <person name="Watanabe A."/>
            <person name="Kawashima K."/>
            <person name="Kishida Y."/>
            <person name="Kiyokawa C."/>
            <person name="Kohara M."/>
            <person name="Matsumoto M."/>
            <person name="Matsuno A."/>
            <person name="Nakazaki N."/>
            <person name="Shimpo S."/>
            <person name="Takeuchi C."/>
            <person name="Yamada M."/>
            <person name="Tabata S."/>
        </authorList>
    </citation>
    <scope>NUCLEOTIDE SEQUENCE [LARGE SCALE GENOMIC DNA]</scope>
    <source>
        <strain>ATCC 29082 / PCC 7421</strain>
    </source>
</reference>
<accession>Q7NMH4</accession>
<gene>
    <name evidence="1" type="primary">rpmF</name>
    <name evidence="1" type="synonym">rpl32</name>
    <name type="ordered locus">gsl0792</name>
</gene>
<comment type="similarity">
    <text evidence="1">Belongs to the bacterial ribosomal protein bL32 family.</text>
</comment>